<reference key="1">
    <citation type="submission" date="2007-11" db="EMBL/GenBank/DDBJ databases">
        <title>Complete sequence of Delftia acidovorans DSM 14801 / SPH-1.</title>
        <authorList>
            <person name="Copeland A."/>
            <person name="Lucas S."/>
            <person name="Lapidus A."/>
            <person name="Barry K."/>
            <person name="Glavina del Rio T."/>
            <person name="Dalin E."/>
            <person name="Tice H."/>
            <person name="Pitluck S."/>
            <person name="Lowry S."/>
            <person name="Clum A."/>
            <person name="Schmutz J."/>
            <person name="Larimer F."/>
            <person name="Land M."/>
            <person name="Hauser L."/>
            <person name="Kyrpides N."/>
            <person name="Kim E."/>
            <person name="Schleheck D."/>
            <person name="Richardson P."/>
        </authorList>
    </citation>
    <scope>NUCLEOTIDE SEQUENCE [LARGE SCALE GENOMIC DNA]</scope>
    <source>
        <strain>DSM 14801 / SPH-1</strain>
    </source>
</reference>
<sequence length="93" mass="10950">MATFKKFNKDKRPKRNTQSLLFKRKRFCRFTVAGVEEIDYKDVDTLRDFIGENGKIVPARLTGTRAIYQRQLNTAIKRARFLALVPYSDQHKI</sequence>
<accession>A9BNG1</accession>
<dbReference type="EMBL" id="CP000884">
    <property type="protein sequence ID" value="ABX37856.1"/>
    <property type="molecule type" value="Genomic_DNA"/>
</dbReference>
<dbReference type="RefSeq" id="WP_012207026.1">
    <property type="nucleotide sequence ID" value="NC_010002.1"/>
</dbReference>
<dbReference type="SMR" id="A9BNG1"/>
<dbReference type="STRING" id="398578.Daci_5227"/>
<dbReference type="GeneID" id="94690775"/>
<dbReference type="KEGG" id="dac:Daci_5227"/>
<dbReference type="eggNOG" id="COG0238">
    <property type="taxonomic scope" value="Bacteria"/>
</dbReference>
<dbReference type="HOGENOM" id="CLU_148710_0_3_4"/>
<dbReference type="Proteomes" id="UP000000784">
    <property type="component" value="Chromosome"/>
</dbReference>
<dbReference type="GO" id="GO:0022627">
    <property type="term" value="C:cytosolic small ribosomal subunit"/>
    <property type="evidence" value="ECO:0007669"/>
    <property type="project" value="TreeGrafter"/>
</dbReference>
<dbReference type="GO" id="GO:0070181">
    <property type="term" value="F:small ribosomal subunit rRNA binding"/>
    <property type="evidence" value="ECO:0007669"/>
    <property type="project" value="TreeGrafter"/>
</dbReference>
<dbReference type="GO" id="GO:0003735">
    <property type="term" value="F:structural constituent of ribosome"/>
    <property type="evidence" value="ECO:0007669"/>
    <property type="project" value="InterPro"/>
</dbReference>
<dbReference type="GO" id="GO:0006412">
    <property type="term" value="P:translation"/>
    <property type="evidence" value="ECO:0007669"/>
    <property type="project" value="UniProtKB-UniRule"/>
</dbReference>
<dbReference type="Gene3D" id="4.10.640.10">
    <property type="entry name" value="Ribosomal protein S18"/>
    <property type="match status" value="1"/>
</dbReference>
<dbReference type="HAMAP" id="MF_00270">
    <property type="entry name" value="Ribosomal_bS18"/>
    <property type="match status" value="1"/>
</dbReference>
<dbReference type="InterPro" id="IPR001648">
    <property type="entry name" value="Ribosomal_bS18"/>
</dbReference>
<dbReference type="InterPro" id="IPR018275">
    <property type="entry name" value="Ribosomal_bS18_CS"/>
</dbReference>
<dbReference type="InterPro" id="IPR036870">
    <property type="entry name" value="Ribosomal_bS18_sf"/>
</dbReference>
<dbReference type="NCBIfam" id="TIGR00165">
    <property type="entry name" value="S18"/>
    <property type="match status" value="1"/>
</dbReference>
<dbReference type="PANTHER" id="PTHR13479">
    <property type="entry name" value="30S RIBOSOMAL PROTEIN S18"/>
    <property type="match status" value="1"/>
</dbReference>
<dbReference type="PANTHER" id="PTHR13479:SF40">
    <property type="entry name" value="SMALL RIBOSOMAL SUBUNIT PROTEIN BS18M"/>
    <property type="match status" value="1"/>
</dbReference>
<dbReference type="Pfam" id="PF01084">
    <property type="entry name" value="Ribosomal_S18"/>
    <property type="match status" value="1"/>
</dbReference>
<dbReference type="PRINTS" id="PR00974">
    <property type="entry name" value="RIBOSOMALS18"/>
</dbReference>
<dbReference type="SUPFAM" id="SSF46911">
    <property type="entry name" value="Ribosomal protein S18"/>
    <property type="match status" value="1"/>
</dbReference>
<dbReference type="PROSITE" id="PS00057">
    <property type="entry name" value="RIBOSOMAL_S18"/>
    <property type="match status" value="1"/>
</dbReference>
<name>RS18_DELAS</name>
<feature type="chain" id="PRO_1000114417" description="Small ribosomal subunit protein bS18">
    <location>
        <begin position="1"/>
        <end position="93"/>
    </location>
</feature>
<evidence type="ECO:0000255" key="1">
    <source>
        <dbReference type="HAMAP-Rule" id="MF_00270"/>
    </source>
</evidence>
<evidence type="ECO:0000305" key="2"/>
<protein>
    <recommendedName>
        <fullName evidence="1">Small ribosomal subunit protein bS18</fullName>
    </recommendedName>
    <alternativeName>
        <fullName evidence="2">30S ribosomal protein S18</fullName>
    </alternativeName>
</protein>
<comment type="function">
    <text evidence="1">Binds as a heterodimer with protein bS6 to the central domain of the 16S rRNA, where it helps stabilize the platform of the 30S subunit.</text>
</comment>
<comment type="subunit">
    <text evidence="1">Part of the 30S ribosomal subunit. Forms a tight heterodimer with protein bS6.</text>
</comment>
<comment type="similarity">
    <text evidence="1">Belongs to the bacterial ribosomal protein bS18 family.</text>
</comment>
<organism>
    <name type="scientific">Delftia acidovorans (strain DSM 14801 / SPH-1)</name>
    <dbReference type="NCBI Taxonomy" id="398578"/>
    <lineage>
        <taxon>Bacteria</taxon>
        <taxon>Pseudomonadati</taxon>
        <taxon>Pseudomonadota</taxon>
        <taxon>Betaproteobacteria</taxon>
        <taxon>Burkholderiales</taxon>
        <taxon>Comamonadaceae</taxon>
        <taxon>Delftia</taxon>
    </lineage>
</organism>
<gene>
    <name evidence="1" type="primary">rpsR</name>
    <name type="ordered locus">Daci_5227</name>
</gene>
<proteinExistence type="inferred from homology"/>
<keyword id="KW-1185">Reference proteome</keyword>
<keyword id="KW-0687">Ribonucleoprotein</keyword>
<keyword id="KW-0689">Ribosomal protein</keyword>
<keyword id="KW-0694">RNA-binding</keyword>
<keyword id="KW-0699">rRNA-binding</keyword>